<protein>
    <recommendedName>
        <fullName>Stonin-2</fullName>
    </recommendedName>
</protein>
<name>STON2_RAT</name>
<keyword id="KW-0963">Cytoplasm</keyword>
<keyword id="KW-0254">Endocytosis</keyword>
<keyword id="KW-0472">Membrane</keyword>
<keyword id="KW-0597">Phosphoprotein</keyword>
<keyword id="KW-1185">Reference proteome</keyword>
<keyword id="KW-0677">Repeat</keyword>
<keyword id="KW-0770">Synapse</keyword>
<keyword id="KW-0771">Synaptosome</keyword>
<keyword id="KW-0832">Ubl conjugation</keyword>
<proteinExistence type="evidence at protein level"/>
<evidence type="ECO:0000250" key="1"/>
<evidence type="ECO:0000250" key="2">
    <source>
        <dbReference type="UniProtKB" id="Q8WXE9"/>
    </source>
</evidence>
<evidence type="ECO:0000255" key="3">
    <source>
        <dbReference type="PROSITE-ProRule" id="PRU00403"/>
    </source>
</evidence>
<evidence type="ECO:0000255" key="4">
    <source>
        <dbReference type="PROSITE-ProRule" id="PRU00404"/>
    </source>
</evidence>
<evidence type="ECO:0000256" key="5">
    <source>
        <dbReference type="SAM" id="MobiDB-lite"/>
    </source>
</evidence>
<evidence type="ECO:0000269" key="6">
    <source>
    </source>
</evidence>
<evidence type="ECO:0000305" key="7"/>
<comment type="function">
    <text evidence="1">Adapter protein involved in endocytic machinery. Involved in the synaptic vesicle recycling. May facilitate clathrin-coated vesicle uncoating (By similarity).</text>
</comment>
<comment type="subunit">
    <text evidence="6">Interacts with the second C2 domain of synaptotagmins SYT1 and SYT2. Interacts with EPS15, EPS15R and ITSN1. Interacts indirectly with the AP-2 adapter complex. Interacts with TOR1A and COPS4; the interaction controls STON2 protein stability.</text>
</comment>
<comment type="subcellular location">
    <subcellularLocation>
        <location evidence="6">Synapse</location>
        <location evidence="6">Synaptosome</location>
    </subcellularLocation>
    <subcellularLocation>
        <location evidence="1">Cytoplasm</location>
    </subcellularLocation>
    <subcellularLocation>
        <location evidence="1">Membrane</location>
    </subcellularLocation>
    <text evidence="1">Some fraction is membrane-associated.</text>
</comment>
<comment type="PTM">
    <text evidence="1">Phosphorylated in vitro by PKD.</text>
</comment>
<comment type="PTM">
    <text evidence="1">Neddylated and ubiquitinated; leading to its degradation and inhibited by TOR1A and COPS4.</text>
</comment>
<comment type="similarity">
    <text evidence="7">Belongs to the Stoned B family.</text>
</comment>
<dbReference type="EMBL" id="AABR06045586">
    <property type="status" value="NOT_ANNOTATED_CDS"/>
    <property type="molecule type" value="Genomic_DNA"/>
</dbReference>
<dbReference type="EMBL" id="AABR06045587">
    <property type="status" value="NOT_ANNOTATED_CDS"/>
    <property type="molecule type" value="Genomic_DNA"/>
</dbReference>
<dbReference type="EMBL" id="AABR06045588">
    <property type="status" value="NOT_ANNOTATED_CDS"/>
    <property type="molecule type" value="Genomic_DNA"/>
</dbReference>
<dbReference type="EMBL" id="AABR06045589">
    <property type="status" value="NOT_ANNOTATED_CDS"/>
    <property type="molecule type" value="Genomic_DNA"/>
</dbReference>
<dbReference type="EMBL" id="AABR06045590">
    <property type="status" value="NOT_ANNOTATED_CDS"/>
    <property type="molecule type" value="Genomic_DNA"/>
</dbReference>
<dbReference type="EMBL" id="AABR06045591">
    <property type="status" value="NOT_ANNOTATED_CDS"/>
    <property type="molecule type" value="Genomic_DNA"/>
</dbReference>
<dbReference type="EMBL" id="AABR06045592">
    <property type="status" value="NOT_ANNOTATED_CDS"/>
    <property type="molecule type" value="Genomic_DNA"/>
</dbReference>
<dbReference type="RefSeq" id="NP_001129346.1">
    <property type="nucleotide sequence ID" value="NM_001135874.1"/>
</dbReference>
<dbReference type="RefSeq" id="XP_006240468.1">
    <property type="nucleotide sequence ID" value="XM_006240406.3"/>
</dbReference>
<dbReference type="RefSeq" id="XP_006240469.1">
    <property type="nucleotide sequence ID" value="XM_006240407.3"/>
</dbReference>
<dbReference type="RefSeq" id="XP_063118022.1">
    <property type="nucleotide sequence ID" value="XM_063261952.1"/>
</dbReference>
<dbReference type="RefSeq" id="XP_063118023.1">
    <property type="nucleotide sequence ID" value="XM_063261953.1"/>
</dbReference>
<dbReference type="SMR" id="D4AB66"/>
<dbReference type="BioGRID" id="260691">
    <property type="interactions" value="2"/>
</dbReference>
<dbReference type="FunCoup" id="D4AB66">
    <property type="interactions" value="134"/>
</dbReference>
<dbReference type="IntAct" id="D4AB66">
    <property type="interactions" value="3"/>
</dbReference>
<dbReference type="MINT" id="D4AB66"/>
<dbReference type="STRING" id="10116.ENSRNOP00000005881"/>
<dbReference type="GlyGen" id="D4AB66">
    <property type="glycosylation" value="3 sites"/>
</dbReference>
<dbReference type="iPTMnet" id="D4AB66"/>
<dbReference type="PhosphoSitePlus" id="D4AB66"/>
<dbReference type="PaxDb" id="10116-ENSRNOP00000005881"/>
<dbReference type="PeptideAtlas" id="D4AB66"/>
<dbReference type="ABCD" id="D4AB66">
    <property type="antibodies" value="1 sequenced antibody"/>
</dbReference>
<dbReference type="Ensembl" id="ENSRNOT00000005881.5">
    <property type="protein sequence ID" value="ENSRNOP00000005881.4"/>
    <property type="gene ID" value="ENSRNOG00000004458.5"/>
</dbReference>
<dbReference type="GeneID" id="314349"/>
<dbReference type="KEGG" id="rno:314349"/>
<dbReference type="UCSC" id="RGD:1311502">
    <property type="organism name" value="rat"/>
</dbReference>
<dbReference type="AGR" id="RGD:1311502"/>
<dbReference type="CTD" id="85439"/>
<dbReference type="RGD" id="1311502">
    <property type="gene designation" value="Ston2"/>
</dbReference>
<dbReference type="eggNOG" id="KOG2677">
    <property type="taxonomic scope" value="Eukaryota"/>
</dbReference>
<dbReference type="GeneTree" id="ENSGT00940000159392"/>
<dbReference type="HOGENOM" id="CLU_016541_0_0_1"/>
<dbReference type="InParanoid" id="D4AB66"/>
<dbReference type="OMA" id="EWVSFND"/>
<dbReference type="OrthoDB" id="37874at9989"/>
<dbReference type="PhylomeDB" id="D4AB66"/>
<dbReference type="TreeFam" id="TF300393"/>
<dbReference type="Reactome" id="R-RNO-8856825">
    <property type="pathway name" value="Cargo recognition for clathrin-mediated endocytosis"/>
</dbReference>
<dbReference type="Reactome" id="R-RNO-8856828">
    <property type="pathway name" value="Clathrin-mediated endocytosis"/>
</dbReference>
<dbReference type="PRO" id="PR:D4AB66"/>
<dbReference type="Proteomes" id="UP000002494">
    <property type="component" value="Chromosome 6"/>
</dbReference>
<dbReference type="Bgee" id="ENSRNOG00000004458">
    <property type="expression patterns" value="Expressed in frontal cortex and 16 other cell types or tissues"/>
</dbReference>
<dbReference type="GO" id="GO:0030122">
    <property type="term" value="C:AP-2 adaptor complex"/>
    <property type="evidence" value="ECO:0000318"/>
    <property type="project" value="GO_Central"/>
</dbReference>
<dbReference type="GO" id="GO:0030136">
    <property type="term" value="C:clathrin-coated vesicle"/>
    <property type="evidence" value="ECO:0000266"/>
    <property type="project" value="RGD"/>
</dbReference>
<dbReference type="GO" id="GO:0005829">
    <property type="term" value="C:cytosol"/>
    <property type="evidence" value="ECO:0007669"/>
    <property type="project" value="Ensembl"/>
</dbReference>
<dbReference type="GO" id="GO:0043005">
    <property type="term" value="C:neuron projection"/>
    <property type="evidence" value="ECO:0007669"/>
    <property type="project" value="UniProtKB-KW"/>
</dbReference>
<dbReference type="GO" id="GO:0005730">
    <property type="term" value="C:nucleolus"/>
    <property type="evidence" value="ECO:0007669"/>
    <property type="project" value="Ensembl"/>
</dbReference>
<dbReference type="GO" id="GO:0098793">
    <property type="term" value="C:presynapse"/>
    <property type="evidence" value="ECO:0000314"/>
    <property type="project" value="SynGO"/>
</dbReference>
<dbReference type="GO" id="GO:0008021">
    <property type="term" value="C:synaptic vesicle"/>
    <property type="evidence" value="ECO:0000266"/>
    <property type="project" value="RGD"/>
</dbReference>
<dbReference type="GO" id="GO:0035615">
    <property type="term" value="F:clathrin adaptor activity"/>
    <property type="evidence" value="ECO:0000318"/>
    <property type="project" value="GO_Central"/>
</dbReference>
<dbReference type="GO" id="GO:0072583">
    <property type="term" value="P:clathrin-dependent endocytosis"/>
    <property type="evidence" value="ECO:0000318"/>
    <property type="project" value="GO_Central"/>
</dbReference>
<dbReference type="GO" id="GO:0002244">
    <property type="term" value="P:hematopoietic progenitor cell differentiation"/>
    <property type="evidence" value="ECO:0000266"/>
    <property type="project" value="RGD"/>
</dbReference>
<dbReference type="GO" id="GO:0030100">
    <property type="term" value="P:regulation of endocytosis"/>
    <property type="evidence" value="ECO:0000266"/>
    <property type="project" value="RGD"/>
</dbReference>
<dbReference type="GO" id="GO:0048488">
    <property type="term" value="P:synaptic vesicle endocytosis"/>
    <property type="evidence" value="ECO:0000314"/>
    <property type="project" value="SynGO"/>
</dbReference>
<dbReference type="CDD" id="cd09263">
    <property type="entry name" value="AP_stonin-2_MHD"/>
    <property type="match status" value="1"/>
</dbReference>
<dbReference type="FunFam" id="2.60.40.1170:FF:000012">
    <property type="entry name" value="Stonin 2"/>
    <property type="match status" value="1"/>
</dbReference>
<dbReference type="FunFam" id="2.60.40.1170:FF:000036">
    <property type="entry name" value="stonin-2 isoform X1"/>
    <property type="match status" value="1"/>
</dbReference>
<dbReference type="FunFam" id="2.60.40.1170:FF:000018">
    <property type="entry name" value="stonin-2 isoform X2"/>
    <property type="match status" value="1"/>
</dbReference>
<dbReference type="Gene3D" id="2.60.40.1170">
    <property type="entry name" value="Mu homology domain, subdomain B"/>
    <property type="match status" value="3"/>
</dbReference>
<dbReference type="InterPro" id="IPR050431">
    <property type="entry name" value="Adaptor_comp_med_subunit"/>
</dbReference>
<dbReference type="InterPro" id="IPR036168">
    <property type="entry name" value="AP2_Mu_C_sf"/>
</dbReference>
<dbReference type="InterPro" id="IPR028565">
    <property type="entry name" value="MHD"/>
</dbReference>
<dbReference type="InterPro" id="IPR012320">
    <property type="entry name" value="SHD_dom"/>
</dbReference>
<dbReference type="InterPro" id="IPR031228">
    <property type="entry name" value="STON2_MHD"/>
</dbReference>
<dbReference type="InterPro" id="IPR017110">
    <property type="entry name" value="Stonin"/>
</dbReference>
<dbReference type="InterPro" id="IPR022699">
    <property type="entry name" value="Stonin2_N"/>
</dbReference>
<dbReference type="PANTHER" id="PTHR10529">
    <property type="entry name" value="AP COMPLEX SUBUNIT MU"/>
    <property type="match status" value="1"/>
</dbReference>
<dbReference type="Pfam" id="PF00928">
    <property type="entry name" value="Adap_comp_sub"/>
    <property type="match status" value="1"/>
</dbReference>
<dbReference type="Pfam" id="PF12016">
    <property type="entry name" value="Stonin2_N"/>
    <property type="match status" value="1"/>
</dbReference>
<dbReference type="PIRSF" id="PIRSF037099">
    <property type="entry name" value="Stonin"/>
    <property type="match status" value="1"/>
</dbReference>
<dbReference type="SUPFAM" id="SSF49447">
    <property type="entry name" value="Second domain of Mu2 adaptin subunit (ap50) of ap2 adaptor"/>
    <property type="match status" value="1"/>
</dbReference>
<dbReference type="PROSITE" id="PS51072">
    <property type="entry name" value="MHD"/>
    <property type="match status" value="1"/>
</dbReference>
<dbReference type="PROSITE" id="PS51070">
    <property type="entry name" value="SHD"/>
    <property type="match status" value="1"/>
</dbReference>
<sequence length="895" mass="99491">MTTLDHVIATHQSEWVSFSEEPLFPTPLEGGTEEHFPGLSSSSDRSESSSGENHAVDEGSQDLSHSEQDDSSEKMGLISEAASPPGSPVQPTPDLASAISNWVQFEDDTPWSNTSAPHKETALTLTVPCWTCPSLDSLRRCPLASESSWTTHSEDTSSPSVAPSYTDLQLINAEEQASGRASGTDSTDNSSSLQEDEEVEMETISWWAGSPAMNGHPAVPQVTTARFPSWVTFEDNEVGCPSPTVPSPKKPNAPSAATAGPDVPFNSTGSFKRDRPKSTLMNLSKVQKLDISSLNRPPSVTEAPPWRATNPFLNESLQDIQPSPINPFSAFFEEQERRSQNSSISGTSGKSQRDSLIVIYQDAISFDDSGKSQSHPDAIEKLKQLQIDDPDPVGNAALPDDDPTASVEPDAPSPTSALSQPRDGWPMMLRIPEKKNIMSSRHWGPIYIKLTDSGYLQLYYEQGLEKPFREFKLEICHEVSEPRLQNYDENGRIHSLRIDRVTYKEKKKYQPKPAVAHAAEREQVIKLGTTNYDDFLSFIHAVQDRLMDLPVQSMDLSTVGLNYLEEEITVDIRDEFSGTVSKGDNQILQHHVLTRIHILSFLSGLAECRLGLNDILIKGNEIVSRQDIMPTTTTKWIKLHECRFHGCVDEDVFNSSRVILFNPLDACRFELMRFRTVFAEKTLPFTLRTAASINGAEVEVQSWLRMSPGFSSNRDPLTQVPCENVMVRYPVPSEWVKNFRRESVLGEKSLKAKVNRGASFGSAGASGSEPVMRVTLGTAKYEHAFNSIVWRINRLPDKNSASGHPHCFFCHLELGSDREVPSRFANHVNVEFSMPTTSASKAAVRSISVEDKPDVRKWVNYSAHYSYKVEIEQKKSLKPDFEGEDLENPKECGVQ</sequence>
<organism>
    <name type="scientific">Rattus norvegicus</name>
    <name type="common">Rat</name>
    <dbReference type="NCBI Taxonomy" id="10116"/>
    <lineage>
        <taxon>Eukaryota</taxon>
        <taxon>Metazoa</taxon>
        <taxon>Chordata</taxon>
        <taxon>Craniata</taxon>
        <taxon>Vertebrata</taxon>
        <taxon>Euteleostomi</taxon>
        <taxon>Mammalia</taxon>
        <taxon>Eutheria</taxon>
        <taxon>Euarchontoglires</taxon>
        <taxon>Glires</taxon>
        <taxon>Rodentia</taxon>
        <taxon>Myomorpha</taxon>
        <taxon>Muroidea</taxon>
        <taxon>Muridae</taxon>
        <taxon>Murinae</taxon>
        <taxon>Rattus</taxon>
    </lineage>
</organism>
<feature type="chain" id="PRO_0000429277" description="Stonin-2">
    <location>
        <begin position="1"/>
        <end position="895"/>
    </location>
</feature>
<feature type="domain" description="SHD" evidence="3">
    <location>
        <begin position="424"/>
        <end position="557"/>
    </location>
</feature>
<feature type="domain" description="MHD" evidence="4">
    <location>
        <begin position="565"/>
        <end position="872"/>
    </location>
</feature>
<feature type="region of interest" description="Disordered" evidence="5">
    <location>
        <begin position="10"/>
        <end position="101"/>
    </location>
</feature>
<feature type="region of interest" description="Disordered" evidence="5">
    <location>
        <begin position="144"/>
        <end position="204"/>
    </location>
</feature>
<feature type="region of interest" description="Disordered" evidence="5">
    <location>
        <begin position="236"/>
        <end position="279"/>
    </location>
</feature>
<feature type="region of interest" description="Disordered" evidence="5">
    <location>
        <begin position="291"/>
        <end position="326"/>
    </location>
</feature>
<feature type="region of interest" description="Disordered" evidence="5">
    <location>
        <begin position="386"/>
        <end position="424"/>
    </location>
</feature>
<feature type="short sequence motif" description="NPF 1">
    <location>
        <begin position="310"/>
        <end position="312"/>
    </location>
</feature>
<feature type="short sequence motif" description="NPF 2">
    <location>
        <begin position="326"/>
        <end position="328"/>
    </location>
</feature>
<feature type="compositionally biased region" description="Basic and acidic residues" evidence="5">
    <location>
        <begin position="64"/>
        <end position="73"/>
    </location>
</feature>
<feature type="compositionally biased region" description="Polar residues" evidence="5">
    <location>
        <begin position="145"/>
        <end position="169"/>
    </location>
</feature>
<feature type="compositionally biased region" description="Polar residues" evidence="5">
    <location>
        <begin position="179"/>
        <end position="193"/>
    </location>
</feature>
<feature type="compositionally biased region" description="Polar residues" evidence="5">
    <location>
        <begin position="311"/>
        <end position="323"/>
    </location>
</feature>
<feature type="modified residue" description="Phosphoserine" evidence="2">
    <location>
        <position position="278"/>
    </location>
</feature>
<feature type="modified residue" description="Phosphoserine" evidence="2">
    <location>
        <position position="284"/>
    </location>
</feature>
<feature type="modified residue" description="Phosphoserine" evidence="2">
    <location>
        <position position="299"/>
    </location>
</feature>
<feature type="modified residue" description="Phosphoserine" evidence="2">
    <location>
        <position position="759"/>
    </location>
</feature>
<gene>
    <name type="primary">Ston2</name>
</gene>
<accession>D4AB66</accession>
<reference key="1">
    <citation type="journal article" date="2004" name="Nature">
        <title>Genome sequence of the Brown Norway rat yields insights into mammalian evolution.</title>
        <authorList>
            <person name="Gibbs R.A."/>
            <person name="Weinstock G.M."/>
            <person name="Metzker M.L."/>
            <person name="Muzny D.M."/>
            <person name="Sodergren E.J."/>
            <person name="Scherer S."/>
            <person name="Scott G."/>
            <person name="Steffen D."/>
            <person name="Worley K.C."/>
            <person name="Burch P.E."/>
            <person name="Okwuonu G."/>
            <person name="Hines S."/>
            <person name="Lewis L."/>
            <person name="Deramo C."/>
            <person name="Delgado O."/>
            <person name="Dugan-Rocha S."/>
            <person name="Miner G."/>
            <person name="Morgan M."/>
            <person name="Hawes A."/>
            <person name="Gill R."/>
            <person name="Holt R.A."/>
            <person name="Adams M.D."/>
            <person name="Amanatides P.G."/>
            <person name="Baden-Tillson H."/>
            <person name="Barnstead M."/>
            <person name="Chin S."/>
            <person name="Evans C.A."/>
            <person name="Ferriera S."/>
            <person name="Fosler C."/>
            <person name="Glodek A."/>
            <person name="Gu Z."/>
            <person name="Jennings D."/>
            <person name="Kraft C.L."/>
            <person name="Nguyen T."/>
            <person name="Pfannkoch C.M."/>
            <person name="Sitter C."/>
            <person name="Sutton G.G."/>
            <person name="Venter J.C."/>
            <person name="Woodage T."/>
            <person name="Smith D."/>
            <person name="Lee H.-M."/>
            <person name="Gustafson E."/>
            <person name="Cahill P."/>
            <person name="Kana A."/>
            <person name="Doucette-Stamm L."/>
            <person name="Weinstock K."/>
            <person name="Fechtel K."/>
            <person name="Weiss R.B."/>
            <person name="Dunn D.M."/>
            <person name="Green E.D."/>
            <person name="Blakesley R.W."/>
            <person name="Bouffard G.G."/>
            <person name="De Jong P.J."/>
            <person name="Osoegawa K."/>
            <person name="Zhu B."/>
            <person name="Marra M."/>
            <person name="Schein J."/>
            <person name="Bosdet I."/>
            <person name="Fjell C."/>
            <person name="Jones S."/>
            <person name="Krzywinski M."/>
            <person name="Mathewson C."/>
            <person name="Siddiqui A."/>
            <person name="Wye N."/>
            <person name="McPherson J."/>
            <person name="Zhao S."/>
            <person name="Fraser C.M."/>
            <person name="Shetty J."/>
            <person name="Shatsman S."/>
            <person name="Geer K."/>
            <person name="Chen Y."/>
            <person name="Abramzon S."/>
            <person name="Nierman W.C."/>
            <person name="Havlak P.H."/>
            <person name="Chen R."/>
            <person name="Durbin K.J."/>
            <person name="Egan A."/>
            <person name="Ren Y."/>
            <person name="Song X.-Z."/>
            <person name="Li B."/>
            <person name="Liu Y."/>
            <person name="Qin X."/>
            <person name="Cawley S."/>
            <person name="Cooney A.J."/>
            <person name="D'Souza L.M."/>
            <person name="Martin K."/>
            <person name="Wu J.Q."/>
            <person name="Gonzalez-Garay M.L."/>
            <person name="Jackson A.R."/>
            <person name="Kalafus K.J."/>
            <person name="McLeod M.P."/>
            <person name="Milosavljevic A."/>
            <person name="Virk D."/>
            <person name="Volkov A."/>
            <person name="Wheeler D.A."/>
            <person name="Zhang Z."/>
            <person name="Bailey J.A."/>
            <person name="Eichler E.E."/>
            <person name="Tuzun E."/>
            <person name="Birney E."/>
            <person name="Mongin E."/>
            <person name="Ureta-Vidal A."/>
            <person name="Woodwark C."/>
            <person name="Zdobnov E."/>
            <person name="Bork P."/>
            <person name="Suyama M."/>
            <person name="Torrents D."/>
            <person name="Alexandersson M."/>
            <person name="Trask B.J."/>
            <person name="Young J.M."/>
            <person name="Huang H."/>
            <person name="Wang H."/>
            <person name="Xing H."/>
            <person name="Daniels S."/>
            <person name="Gietzen D."/>
            <person name="Schmidt J."/>
            <person name="Stevens K."/>
            <person name="Vitt U."/>
            <person name="Wingrove J."/>
            <person name="Camara F."/>
            <person name="Mar Alba M."/>
            <person name="Abril J.F."/>
            <person name="Guigo R."/>
            <person name="Smit A."/>
            <person name="Dubchak I."/>
            <person name="Rubin E.M."/>
            <person name="Couronne O."/>
            <person name="Poliakov A."/>
            <person name="Huebner N."/>
            <person name="Ganten D."/>
            <person name="Goesele C."/>
            <person name="Hummel O."/>
            <person name="Kreitler T."/>
            <person name="Lee Y.-A."/>
            <person name="Monti J."/>
            <person name="Schulz H."/>
            <person name="Zimdahl H."/>
            <person name="Himmelbauer H."/>
            <person name="Lehrach H."/>
            <person name="Jacob H.J."/>
            <person name="Bromberg S."/>
            <person name="Gullings-Handley J."/>
            <person name="Jensen-Seaman M.I."/>
            <person name="Kwitek A.E."/>
            <person name="Lazar J."/>
            <person name="Pasko D."/>
            <person name="Tonellato P.J."/>
            <person name="Twigger S."/>
            <person name="Ponting C.P."/>
            <person name="Duarte J.M."/>
            <person name="Rice S."/>
            <person name="Goodstadt L."/>
            <person name="Beatson S.A."/>
            <person name="Emes R.D."/>
            <person name="Winter E.E."/>
            <person name="Webber C."/>
            <person name="Brandt P."/>
            <person name="Nyakatura G."/>
            <person name="Adetobi M."/>
            <person name="Chiaromonte F."/>
            <person name="Elnitski L."/>
            <person name="Eswara P."/>
            <person name="Hardison R.C."/>
            <person name="Hou M."/>
            <person name="Kolbe D."/>
            <person name="Makova K."/>
            <person name="Miller W."/>
            <person name="Nekrutenko A."/>
            <person name="Riemer C."/>
            <person name="Schwartz S."/>
            <person name="Taylor J."/>
            <person name="Yang S."/>
            <person name="Zhang Y."/>
            <person name="Lindpaintner K."/>
            <person name="Andrews T.D."/>
            <person name="Caccamo M."/>
            <person name="Clamp M."/>
            <person name="Clarke L."/>
            <person name="Curwen V."/>
            <person name="Durbin R.M."/>
            <person name="Eyras E."/>
            <person name="Searle S.M."/>
            <person name="Cooper G.M."/>
            <person name="Batzoglou S."/>
            <person name="Brudno M."/>
            <person name="Sidow A."/>
            <person name="Stone E.A."/>
            <person name="Payseur B.A."/>
            <person name="Bourque G."/>
            <person name="Lopez-Otin C."/>
            <person name="Puente X.S."/>
            <person name="Chakrabarti K."/>
            <person name="Chatterji S."/>
            <person name="Dewey C."/>
            <person name="Pachter L."/>
            <person name="Bray N."/>
            <person name="Yap V.B."/>
            <person name="Caspi A."/>
            <person name="Tesler G."/>
            <person name="Pevzner P.A."/>
            <person name="Haussler D."/>
            <person name="Roskin K.M."/>
            <person name="Baertsch R."/>
            <person name="Clawson H."/>
            <person name="Furey T.S."/>
            <person name="Hinrichs A.S."/>
            <person name="Karolchik D."/>
            <person name="Kent W.J."/>
            <person name="Rosenbloom K.R."/>
            <person name="Trumbower H."/>
            <person name="Weirauch M."/>
            <person name="Cooper D.N."/>
            <person name="Stenson P.D."/>
            <person name="Ma B."/>
            <person name="Brent M."/>
            <person name="Arumugam M."/>
            <person name="Shteynberg D."/>
            <person name="Copley R.R."/>
            <person name="Taylor M.S."/>
            <person name="Riethman H."/>
            <person name="Mudunuri U."/>
            <person name="Peterson J."/>
            <person name="Guyer M."/>
            <person name="Felsenfeld A."/>
            <person name="Old S."/>
            <person name="Mockrin S."/>
            <person name="Collins F.S."/>
        </authorList>
    </citation>
    <scope>NUCLEOTIDE SEQUENCE [LARGE SCALE GENOMIC DNA]</scope>
    <source>
        <strain>Brown Norway</strain>
    </source>
</reference>
<reference key="2">
    <citation type="journal article" date="2011" name="EMBO J.">
        <title>CSN complex controls the stability of selected synaptic proteins via a torsinA-dependent process.</title>
        <authorList>
            <person name="Granata A."/>
            <person name="Koo S.J."/>
            <person name="Haucke V."/>
            <person name="Schiavo G."/>
            <person name="Warner T.T."/>
        </authorList>
    </citation>
    <scope>INTERACTION WITH TOR1A AND COPS4</scope>
    <scope>SUBCELLULAR LOCATION</scope>
</reference>